<protein>
    <recommendedName>
        <fullName>Protein O-linked-mannose beta-1,4-N-acetylglucosaminyltransferase 2</fullName>
        <shortName>POMGnT2</shortName>
        <ecNumber evidence="1">2.4.1.312</ecNumber>
    </recommendedName>
    <alternativeName>
        <fullName>Extracellular O-linked N-acetylglucosamine transferase-like</fullName>
    </alternativeName>
    <alternativeName>
        <fullName>Glycosyltransferase-like domain-containing protein 2</fullName>
    </alternativeName>
</protein>
<reference key="1">
    <citation type="journal article" date="2005" name="Science">
        <title>The transcriptional landscape of the mammalian genome.</title>
        <authorList>
            <person name="Carninci P."/>
            <person name="Kasukawa T."/>
            <person name="Katayama S."/>
            <person name="Gough J."/>
            <person name="Frith M.C."/>
            <person name="Maeda N."/>
            <person name="Oyama R."/>
            <person name="Ravasi T."/>
            <person name="Lenhard B."/>
            <person name="Wells C."/>
            <person name="Kodzius R."/>
            <person name="Shimokawa K."/>
            <person name="Bajic V.B."/>
            <person name="Brenner S.E."/>
            <person name="Batalov S."/>
            <person name="Forrest A.R."/>
            <person name="Zavolan M."/>
            <person name="Davis M.J."/>
            <person name="Wilming L.G."/>
            <person name="Aidinis V."/>
            <person name="Allen J.E."/>
            <person name="Ambesi-Impiombato A."/>
            <person name="Apweiler R."/>
            <person name="Aturaliya R.N."/>
            <person name="Bailey T.L."/>
            <person name="Bansal M."/>
            <person name="Baxter L."/>
            <person name="Beisel K.W."/>
            <person name="Bersano T."/>
            <person name="Bono H."/>
            <person name="Chalk A.M."/>
            <person name="Chiu K.P."/>
            <person name="Choudhary V."/>
            <person name="Christoffels A."/>
            <person name="Clutterbuck D.R."/>
            <person name="Crowe M.L."/>
            <person name="Dalla E."/>
            <person name="Dalrymple B.P."/>
            <person name="de Bono B."/>
            <person name="Della Gatta G."/>
            <person name="di Bernardo D."/>
            <person name="Down T."/>
            <person name="Engstrom P."/>
            <person name="Fagiolini M."/>
            <person name="Faulkner G."/>
            <person name="Fletcher C.F."/>
            <person name="Fukushima T."/>
            <person name="Furuno M."/>
            <person name="Futaki S."/>
            <person name="Gariboldi M."/>
            <person name="Georgii-Hemming P."/>
            <person name="Gingeras T.R."/>
            <person name="Gojobori T."/>
            <person name="Green R.E."/>
            <person name="Gustincich S."/>
            <person name="Harbers M."/>
            <person name="Hayashi Y."/>
            <person name="Hensch T.K."/>
            <person name="Hirokawa N."/>
            <person name="Hill D."/>
            <person name="Huminiecki L."/>
            <person name="Iacono M."/>
            <person name="Ikeo K."/>
            <person name="Iwama A."/>
            <person name="Ishikawa T."/>
            <person name="Jakt M."/>
            <person name="Kanapin A."/>
            <person name="Katoh M."/>
            <person name="Kawasawa Y."/>
            <person name="Kelso J."/>
            <person name="Kitamura H."/>
            <person name="Kitano H."/>
            <person name="Kollias G."/>
            <person name="Krishnan S.P."/>
            <person name="Kruger A."/>
            <person name="Kummerfeld S.K."/>
            <person name="Kurochkin I.V."/>
            <person name="Lareau L.F."/>
            <person name="Lazarevic D."/>
            <person name="Lipovich L."/>
            <person name="Liu J."/>
            <person name="Liuni S."/>
            <person name="McWilliam S."/>
            <person name="Madan Babu M."/>
            <person name="Madera M."/>
            <person name="Marchionni L."/>
            <person name="Matsuda H."/>
            <person name="Matsuzawa S."/>
            <person name="Miki H."/>
            <person name="Mignone F."/>
            <person name="Miyake S."/>
            <person name="Morris K."/>
            <person name="Mottagui-Tabar S."/>
            <person name="Mulder N."/>
            <person name="Nakano N."/>
            <person name="Nakauchi H."/>
            <person name="Ng P."/>
            <person name="Nilsson R."/>
            <person name="Nishiguchi S."/>
            <person name="Nishikawa S."/>
            <person name="Nori F."/>
            <person name="Ohara O."/>
            <person name="Okazaki Y."/>
            <person name="Orlando V."/>
            <person name="Pang K.C."/>
            <person name="Pavan W.J."/>
            <person name="Pavesi G."/>
            <person name="Pesole G."/>
            <person name="Petrovsky N."/>
            <person name="Piazza S."/>
            <person name="Reed J."/>
            <person name="Reid J.F."/>
            <person name="Ring B.Z."/>
            <person name="Ringwald M."/>
            <person name="Rost B."/>
            <person name="Ruan Y."/>
            <person name="Salzberg S.L."/>
            <person name="Sandelin A."/>
            <person name="Schneider C."/>
            <person name="Schoenbach C."/>
            <person name="Sekiguchi K."/>
            <person name="Semple C.A."/>
            <person name="Seno S."/>
            <person name="Sessa L."/>
            <person name="Sheng Y."/>
            <person name="Shibata Y."/>
            <person name="Shimada H."/>
            <person name="Shimada K."/>
            <person name="Silva D."/>
            <person name="Sinclair B."/>
            <person name="Sperling S."/>
            <person name="Stupka E."/>
            <person name="Sugiura K."/>
            <person name="Sultana R."/>
            <person name="Takenaka Y."/>
            <person name="Taki K."/>
            <person name="Tammoja K."/>
            <person name="Tan S.L."/>
            <person name="Tang S."/>
            <person name="Taylor M.S."/>
            <person name="Tegner J."/>
            <person name="Teichmann S.A."/>
            <person name="Ueda H.R."/>
            <person name="van Nimwegen E."/>
            <person name="Verardo R."/>
            <person name="Wei C.L."/>
            <person name="Yagi K."/>
            <person name="Yamanishi H."/>
            <person name="Zabarovsky E."/>
            <person name="Zhu S."/>
            <person name="Zimmer A."/>
            <person name="Hide W."/>
            <person name="Bult C."/>
            <person name="Grimmond S.M."/>
            <person name="Teasdale R.D."/>
            <person name="Liu E.T."/>
            <person name="Brusic V."/>
            <person name="Quackenbush J."/>
            <person name="Wahlestedt C."/>
            <person name="Mattick J.S."/>
            <person name="Hume D.A."/>
            <person name="Kai C."/>
            <person name="Sasaki D."/>
            <person name="Tomaru Y."/>
            <person name="Fukuda S."/>
            <person name="Kanamori-Katayama M."/>
            <person name="Suzuki M."/>
            <person name="Aoki J."/>
            <person name="Arakawa T."/>
            <person name="Iida J."/>
            <person name="Imamura K."/>
            <person name="Itoh M."/>
            <person name="Kato T."/>
            <person name="Kawaji H."/>
            <person name="Kawagashira N."/>
            <person name="Kawashima T."/>
            <person name="Kojima M."/>
            <person name="Kondo S."/>
            <person name="Konno H."/>
            <person name="Nakano K."/>
            <person name="Ninomiya N."/>
            <person name="Nishio T."/>
            <person name="Okada M."/>
            <person name="Plessy C."/>
            <person name="Shibata K."/>
            <person name="Shiraki T."/>
            <person name="Suzuki S."/>
            <person name="Tagami M."/>
            <person name="Waki K."/>
            <person name="Watahiki A."/>
            <person name="Okamura-Oho Y."/>
            <person name="Suzuki H."/>
            <person name="Kawai J."/>
            <person name="Hayashizaki Y."/>
        </authorList>
    </citation>
    <scope>NUCLEOTIDE SEQUENCE [LARGE SCALE MRNA]</scope>
    <source>
        <strain>C57BL/6J</strain>
        <tissue>Embryo</tissue>
        <tissue>Ovary</tissue>
    </source>
</reference>
<reference key="2">
    <citation type="journal article" date="2004" name="Genome Res.">
        <title>The status, quality, and expansion of the NIH full-length cDNA project: the Mammalian Gene Collection (MGC).</title>
        <authorList>
            <consortium name="The MGC Project Team"/>
        </authorList>
    </citation>
    <scope>NUCLEOTIDE SEQUENCE [LARGE SCALE MRNA]</scope>
    <source>
        <strain>FVB/N</strain>
        <tissue>Mammary tumor</tissue>
        <tissue>Salivary gland</tissue>
    </source>
</reference>
<reference key="3">
    <citation type="journal article" date="2010" name="Cell">
        <title>A tissue-specific atlas of mouse protein phosphorylation and expression.</title>
        <authorList>
            <person name="Huttlin E.L."/>
            <person name="Jedrychowski M.P."/>
            <person name="Elias J.E."/>
            <person name="Goswami T."/>
            <person name="Rad R."/>
            <person name="Beausoleil S.A."/>
            <person name="Villen J."/>
            <person name="Haas W."/>
            <person name="Sowa M.E."/>
            <person name="Gygi S.P."/>
        </authorList>
    </citation>
    <scope>IDENTIFICATION BY MASS SPECTROMETRY [LARGE SCALE ANALYSIS]</scope>
    <source>
        <tissue>Brain</tissue>
        <tissue>Pancreas</tissue>
    </source>
</reference>
<reference key="4">
    <citation type="journal article" date="2012" name="Am. J. Hum. Genet.">
        <title>Exome sequencing and functional validation in zebrafish identify GTDC2 mutations as a cause of Walker-Warburg syndrome.</title>
        <authorList>
            <person name="Manzini M.C."/>
            <person name="Tambunan D.E."/>
            <person name="Hill R.S."/>
            <person name="Yu T.W."/>
            <person name="Maynard T.M."/>
            <person name="Heinzen E.L."/>
            <person name="Shianna K.V."/>
            <person name="Stevens C.R."/>
            <person name="Partlow J.N."/>
            <person name="Barry B.J."/>
            <person name="Rodriguez J."/>
            <person name="Gupta V.A."/>
            <person name="Al-Qudah A.K."/>
            <person name="Eyaid W.M."/>
            <person name="Friedman J.M."/>
            <person name="Salih M.A."/>
            <person name="Clark R."/>
            <person name="Moroni I."/>
            <person name="Mora M."/>
            <person name="Beggs A.H."/>
            <person name="Gabriel S.B."/>
            <person name="Walsh C.A."/>
        </authorList>
    </citation>
    <scope>DEVELOPMENTAL STAGE</scope>
</reference>
<reference key="5">
    <citation type="journal article" date="2013" name="Sci. Rep.">
        <title>AGO61-dependent GlcNAc modification primes the formation of functional glycans on alpha-dystroglycan.</title>
        <authorList>
            <person name="Yagi H."/>
            <person name="Nakagawa N."/>
            <person name="Saito T."/>
            <person name="Kiyonari H."/>
            <person name="Abe T."/>
            <person name="Toda T."/>
            <person name="Wu S.W."/>
            <person name="Khoo K.H."/>
            <person name="Oka S."/>
            <person name="Kato K."/>
        </authorList>
    </citation>
    <scope>FUNCTION</scope>
    <scope>TISSUE SPECIFICITY</scope>
    <scope>DISRUPTION PHENOTYPE</scope>
</reference>
<comment type="function">
    <text evidence="1 5">O-linked mannose beta-1,4-N-acetylglucosaminyltransferase that transfers UDP-N-acetyl-D-glucosamine to the 4-position of the mannose to generate N-acetyl-D-glucosamine-beta-1,4-O-D-mannosylprotein (By similarity). Involved in the biosynthesis of the phosphorylated O-mannosyl trisaccharide (N-acetylgalactosamine-beta-3-N-acetylglucosamine-beta-4-(phosphate-6-)mannose), a carbohydrate structure present in alpha-dystroglycan (DAG1), which is required for binding laminin G-like domain-containing extracellular proteins with high affinity (PubMed:24256719).</text>
</comment>
<comment type="catalytic activity">
    <reaction evidence="1">
        <text>3-O-(alpha-D-mannosyl)-L-threonyl-[protein] + UDP-N-acetyl-alpha-D-glucosamine = 3-O-(N-acetyl-beta-D-glucosaminyl-(1-&gt;4)-alpha-D-mannosyl)-L-threonyl-[protein] + UDP + H(+)</text>
        <dbReference type="Rhea" id="RHEA:37663"/>
        <dbReference type="Rhea" id="RHEA-COMP:13547"/>
        <dbReference type="Rhea" id="RHEA-COMP:13618"/>
        <dbReference type="ChEBI" id="CHEBI:15378"/>
        <dbReference type="ChEBI" id="CHEBI:57705"/>
        <dbReference type="ChEBI" id="CHEBI:58223"/>
        <dbReference type="ChEBI" id="CHEBI:137323"/>
        <dbReference type="ChEBI" id="CHEBI:137540"/>
        <dbReference type="EC" id="2.4.1.312"/>
    </reaction>
</comment>
<comment type="pathway">
    <text evidence="5">Protein modification; protein glycosylation.</text>
</comment>
<comment type="subcellular location">
    <subcellularLocation>
        <location evidence="1">Endoplasmic reticulum membrane</location>
        <topology evidence="1">Single-pass type II membrane protein</topology>
    </subcellularLocation>
</comment>
<comment type="tissue specificity">
    <text evidence="5">Mainly expressed in the central nervous system.</text>
</comment>
<comment type="developmental stage">
    <text evidence="4">Expressed during brain development. At 14.5 dpc, expressed throughout the cortical plate and the developing brain, as well as throughout the eye, including the lens and cornea. Cortical expression is already detected at 12.5 dpc, peaks between 14.5 and 16.5 dpc and is reduced at birth.</text>
</comment>
<comment type="disruption phenotype">
    <text evidence="5">Newborns are slightly smaller and die within the first day of birth due to abnormal basal lamina formation and neuronal migration defects. Defects are due to a lack of laminin-binding glycans.</text>
</comment>
<comment type="similarity">
    <text evidence="6">Belongs to the glycosyltransferase 61 family.</text>
</comment>
<comment type="sequence caution" evidence="6">
    <conflict type="erroneous termination">
        <sequence resource="EMBL-CDS" id="BAC31348"/>
    </conflict>
    <text>Truncated C-terminus.</text>
</comment>
<comment type="sequence caution" evidence="6">
    <conflict type="frameshift">
        <sequence resource="EMBL-CDS" id="BAC35765"/>
    </conflict>
</comment>
<evidence type="ECO:0000250" key="1">
    <source>
        <dbReference type="UniProtKB" id="Q8NAT1"/>
    </source>
</evidence>
<evidence type="ECO:0000255" key="2"/>
<evidence type="ECO:0000255" key="3">
    <source>
        <dbReference type="PROSITE-ProRule" id="PRU00316"/>
    </source>
</evidence>
<evidence type="ECO:0000269" key="4">
    <source>
    </source>
</evidence>
<evidence type="ECO:0000269" key="5">
    <source>
    </source>
</evidence>
<evidence type="ECO:0000305" key="6"/>
<accession>Q8BW41</accession>
<accession>Q58F17</accession>
<accession>Q8BXZ9</accession>
<accession>Q8K0M5</accession>
<sequence length="580" mass="66661">MHLSAVFNALLVSVLAAVLWKHVRLREHAATLEEELALGQQSLDPVLGLKIDYPKALQILMEGGTHMVCTGRTHTDRICRFKWLCYSNEAEEFIFFHGNSSVMLPNLGSRRFQPALLDLSTVEDHNAQYFNFVELPAAALRFMPKPVFVPDVALIANRFNPDNLMHVFHDDLLPLFYTLRQFPGLAQEARLFFMEGWGEGAHFDLYKLLSPKQPLLRAQLKTLGRLLCFSHAFVGLSKVTTWYQYGFVQPQGPKANILVSGNEIRQFTRFMTERLNVSHAGAPLGEEYILVFSRTQNRLILNEAELLLELAQEFQMKTVTVSLEDHTFADVVRLVSNASMLVSMHGAQLVTALFLPRGATVVELFPYAVNPDHYTPYKTLATLPGMDLQYVAWRNMIRENTVTHPERPWDQGGITHLDRAEQARILQSREVPRHLCCRNPEWLFRIYQDTRVDIPSLMQSIRRVVKGRPGPRRQRWAISLYPGKVREARCQASVQGATEARLSVSWQIPWNLKYLKVREVKYEVWLQEQGENTYVPYMLTLQNHTFTENIKPFTTYLVWVRCIFNRSLLGPFADVLVCST</sequence>
<feature type="chain" id="PRO_0000249015" description="Protein O-linked-mannose beta-1,4-N-acetylglucosaminyltransferase 2">
    <location>
        <begin position="1"/>
        <end position="580"/>
    </location>
</feature>
<feature type="topological domain" description="Cytoplasmic" evidence="2">
    <location>
        <begin position="1"/>
        <end position="4"/>
    </location>
</feature>
<feature type="transmembrane region" description="Helical; Signal-anchor for type II membrane protein" evidence="2">
    <location>
        <begin position="5"/>
        <end position="25"/>
    </location>
</feature>
<feature type="topological domain" description="Lumenal" evidence="2">
    <location>
        <begin position="26"/>
        <end position="580"/>
    </location>
</feature>
<feature type="domain" description="Fibronectin type-III" evidence="3">
    <location>
        <begin position="488"/>
        <end position="580"/>
    </location>
</feature>
<feature type="glycosylation site" description="N-linked (GlcNAc...) asparagine" evidence="2">
    <location>
        <position position="99"/>
    </location>
</feature>
<feature type="glycosylation site" description="N-linked (GlcNAc...) asparagine" evidence="2">
    <location>
        <position position="276"/>
    </location>
</feature>
<feature type="sequence conflict" description="In Ref. 2; AAH30931." evidence="6" ref="2">
    <original>S</original>
    <variation>T</variation>
    <location>
        <position position="567"/>
    </location>
</feature>
<proteinExistence type="evidence at protein level"/>
<organism>
    <name type="scientific">Mus musculus</name>
    <name type="common">Mouse</name>
    <dbReference type="NCBI Taxonomy" id="10090"/>
    <lineage>
        <taxon>Eukaryota</taxon>
        <taxon>Metazoa</taxon>
        <taxon>Chordata</taxon>
        <taxon>Craniata</taxon>
        <taxon>Vertebrata</taxon>
        <taxon>Euteleostomi</taxon>
        <taxon>Mammalia</taxon>
        <taxon>Eutheria</taxon>
        <taxon>Euarchontoglires</taxon>
        <taxon>Glires</taxon>
        <taxon>Rodentia</taxon>
        <taxon>Myomorpha</taxon>
        <taxon>Muroidea</taxon>
        <taxon>Muridae</taxon>
        <taxon>Murinae</taxon>
        <taxon>Mus</taxon>
        <taxon>Mus</taxon>
    </lineage>
</organism>
<gene>
    <name type="primary">Pomgnt2</name>
    <name type="synonym">Ago61</name>
    <name type="synonym">Eogtl</name>
    <name type="synonym">Gtdc2</name>
</gene>
<keyword id="KW-0256">Endoplasmic reticulum</keyword>
<keyword id="KW-0325">Glycoprotein</keyword>
<keyword id="KW-0328">Glycosyltransferase</keyword>
<keyword id="KW-0472">Membrane</keyword>
<keyword id="KW-1185">Reference proteome</keyword>
<keyword id="KW-0735">Signal-anchor</keyword>
<keyword id="KW-0808">Transferase</keyword>
<keyword id="KW-0812">Transmembrane</keyword>
<keyword id="KW-1133">Transmembrane helix</keyword>
<name>PMGT2_MOUSE</name>
<dbReference type="EC" id="2.4.1.312" evidence="1"/>
<dbReference type="EMBL" id="AK042747">
    <property type="protein sequence ID" value="BAC31348.1"/>
    <property type="status" value="ALT_SEQ"/>
    <property type="molecule type" value="mRNA"/>
</dbReference>
<dbReference type="EMBL" id="AK054403">
    <property type="protein sequence ID" value="BAC35765.1"/>
    <property type="status" value="ALT_FRAME"/>
    <property type="molecule type" value="mRNA"/>
</dbReference>
<dbReference type="EMBL" id="AK133802">
    <property type="protein sequence ID" value="BAE21851.1"/>
    <property type="molecule type" value="mRNA"/>
</dbReference>
<dbReference type="EMBL" id="BC025056">
    <property type="protein sequence ID" value="AAH25056.1"/>
    <property type="molecule type" value="mRNA"/>
</dbReference>
<dbReference type="EMBL" id="BC030931">
    <property type="protein sequence ID" value="AAH30931.1"/>
    <property type="molecule type" value="mRNA"/>
</dbReference>
<dbReference type="CCDS" id="CCDS23643.1"/>
<dbReference type="RefSeq" id="NP_001276487.1">
    <property type="nucleotide sequence ID" value="NM_001289558.2"/>
</dbReference>
<dbReference type="RefSeq" id="NP_001276488.1">
    <property type="nucleotide sequence ID" value="NM_001289559.2"/>
</dbReference>
<dbReference type="RefSeq" id="NP_001276489.1">
    <property type="nucleotide sequence ID" value="NM_001289560.2"/>
</dbReference>
<dbReference type="RefSeq" id="NP_001395035.1">
    <property type="nucleotide sequence ID" value="NM_001408106.1"/>
</dbReference>
<dbReference type="RefSeq" id="NP_001395036.1">
    <property type="nucleotide sequence ID" value="NM_001408107.1"/>
</dbReference>
<dbReference type="RefSeq" id="NP_705768.4">
    <property type="nucleotide sequence ID" value="NM_153540.4"/>
</dbReference>
<dbReference type="RefSeq" id="XP_011241257.1">
    <property type="nucleotide sequence ID" value="XM_011242955.1"/>
</dbReference>
<dbReference type="RefSeq" id="XP_036010725.1">
    <property type="nucleotide sequence ID" value="XM_036154832.1"/>
</dbReference>
<dbReference type="SMR" id="Q8BW41"/>
<dbReference type="BioGRID" id="229636">
    <property type="interactions" value="2"/>
</dbReference>
<dbReference type="FunCoup" id="Q8BW41">
    <property type="interactions" value="412"/>
</dbReference>
<dbReference type="STRING" id="10090.ENSMUSP00000149077"/>
<dbReference type="CAZy" id="GT61">
    <property type="family name" value="Glycosyltransferase Family 61"/>
</dbReference>
<dbReference type="GlyConnect" id="2638">
    <property type="glycosylation" value="4 N-Linked glycans (2 sites)"/>
</dbReference>
<dbReference type="GlyCosmos" id="Q8BW41">
    <property type="glycosylation" value="3 sites, 4 glycans"/>
</dbReference>
<dbReference type="GlyGen" id="Q8BW41">
    <property type="glycosylation" value="4 sites, 7 N-linked glycans (3 sites), 1 O-linked glycan (1 site)"/>
</dbReference>
<dbReference type="iPTMnet" id="Q8BW41"/>
<dbReference type="PhosphoSitePlus" id="Q8BW41"/>
<dbReference type="SwissPalm" id="Q8BW41"/>
<dbReference type="PaxDb" id="10090-ENSMUSP00000095868"/>
<dbReference type="PeptideAtlas" id="Q8BW41"/>
<dbReference type="Pumba" id="Q8BW41"/>
<dbReference type="Antibodypedia" id="29340">
    <property type="antibodies" value="157 antibodies from 27 providers"/>
</dbReference>
<dbReference type="Ensembl" id="ENSMUST00000084743.7">
    <property type="protein sequence ID" value="ENSMUSP00000095868.4"/>
    <property type="gene ID" value="ENSMUSG00000066235.8"/>
</dbReference>
<dbReference type="Ensembl" id="ENSMUST00000216669.2">
    <property type="protein sequence ID" value="ENSMUSP00000149077.2"/>
    <property type="gene ID" value="ENSMUSG00000066235.8"/>
</dbReference>
<dbReference type="Ensembl" id="ENSMUST00000217610.2">
    <property type="protein sequence ID" value="ENSMUSP00000149753.2"/>
    <property type="gene ID" value="ENSMUSG00000066235.8"/>
</dbReference>
<dbReference type="GeneID" id="215494"/>
<dbReference type="KEGG" id="mmu:215494"/>
<dbReference type="AGR" id="MGI:2143424"/>
<dbReference type="CTD" id="84892"/>
<dbReference type="MGI" id="MGI:2143424">
    <property type="gene designation" value="Pomgnt2"/>
</dbReference>
<dbReference type="VEuPathDB" id="HostDB:ENSMUSG00000066235"/>
<dbReference type="eggNOG" id="KOG4698">
    <property type="taxonomic scope" value="Eukaryota"/>
</dbReference>
<dbReference type="GeneTree" id="ENSGT00940000160695"/>
<dbReference type="HOGENOM" id="CLU_020169_0_0_1"/>
<dbReference type="InParanoid" id="Q8BW41"/>
<dbReference type="OMA" id="EFQMRVV"/>
<dbReference type="OrthoDB" id="529273at2759"/>
<dbReference type="PhylomeDB" id="Q8BW41"/>
<dbReference type="TreeFam" id="TF332712"/>
<dbReference type="Reactome" id="R-MMU-5173105">
    <property type="pathway name" value="O-linked glycosylation"/>
</dbReference>
<dbReference type="UniPathway" id="UPA00378"/>
<dbReference type="BioGRID-ORCS" id="215494">
    <property type="hits" value="1 hit in 76 CRISPR screens"/>
</dbReference>
<dbReference type="CD-CODE" id="CE726F99">
    <property type="entry name" value="Postsynaptic density"/>
</dbReference>
<dbReference type="PRO" id="PR:Q8BW41"/>
<dbReference type="Proteomes" id="UP000000589">
    <property type="component" value="Chromosome 9"/>
</dbReference>
<dbReference type="RNAct" id="Q8BW41">
    <property type="molecule type" value="protein"/>
</dbReference>
<dbReference type="Bgee" id="ENSMUSG00000066235">
    <property type="expression patterns" value="Expressed in facial nucleus and 224 other cell types or tissues"/>
</dbReference>
<dbReference type="ExpressionAtlas" id="Q8BW41">
    <property type="expression patterns" value="baseline and differential"/>
</dbReference>
<dbReference type="GO" id="GO:0005783">
    <property type="term" value="C:endoplasmic reticulum"/>
    <property type="evidence" value="ECO:0000250"/>
    <property type="project" value="UniProtKB"/>
</dbReference>
<dbReference type="GO" id="GO:0005789">
    <property type="term" value="C:endoplasmic reticulum membrane"/>
    <property type="evidence" value="ECO:0000266"/>
    <property type="project" value="MGI"/>
</dbReference>
<dbReference type="GO" id="GO:0008375">
    <property type="term" value="F:acetylglucosaminyltransferase activity"/>
    <property type="evidence" value="ECO:0000315"/>
    <property type="project" value="MGI"/>
</dbReference>
<dbReference type="GO" id="GO:0097363">
    <property type="term" value="F:protein O-acetylglucosaminyltransferase activity"/>
    <property type="evidence" value="ECO:0000266"/>
    <property type="project" value="MGI"/>
</dbReference>
<dbReference type="GO" id="GO:0001764">
    <property type="term" value="P:neuron migration"/>
    <property type="evidence" value="ECO:0000315"/>
    <property type="project" value="UniProtKB"/>
</dbReference>
<dbReference type="GO" id="GO:0006493">
    <property type="term" value="P:protein O-linked glycosylation"/>
    <property type="evidence" value="ECO:0000315"/>
    <property type="project" value="MGI"/>
</dbReference>
<dbReference type="GO" id="GO:0035269">
    <property type="term" value="P:protein O-linked mannosylation"/>
    <property type="evidence" value="ECO:0000315"/>
    <property type="project" value="UniProtKB"/>
</dbReference>
<dbReference type="CDD" id="cd00063">
    <property type="entry name" value="FN3"/>
    <property type="match status" value="1"/>
</dbReference>
<dbReference type="Gene3D" id="2.60.40.10">
    <property type="entry name" value="Immunoglobulins"/>
    <property type="match status" value="1"/>
</dbReference>
<dbReference type="InterPro" id="IPR003961">
    <property type="entry name" value="FN3_dom"/>
</dbReference>
<dbReference type="InterPro" id="IPR036116">
    <property type="entry name" value="FN3_sf"/>
</dbReference>
<dbReference type="InterPro" id="IPR049625">
    <property type="entry name" value="Glyco_transf_61_cat"/>
</dbReference>
<dbReference type="InterPro" id="IPR007657">
    <property type="entry name" value="Glycosyltransferase_61"/>
</dbReference>
<dbReference type="InterPro" id="IPR013783">
    <property type="entry name" value="Ig-like_fold"/>
</dbReference>
<dbReference type="PANTHER" id="PTHR20961">
    <property type="entry name" value="GLYCOSYLTRANSFERASE"/>
    <property type="match status" value="1"/>
</dbReference>
<dbReference type="PANTHER" id="PTHR20961:SF38">
    <property type="entry name" value="PROTEIN O-LINKED-MANNOSE BETA-1,4-N-ACETYLGLUCOSAMINYLTRANSFERASE 2"/>
    <property type="match status" value="1"/>
</dbReference>
<dbReference type="Pfam" id="PF04577">
    <property type="entry name" value="Glyco_transf_61"/>
    <property type="match status" value="1"/>
</dbReference>
<dbReference type="SUPFAM" id="SSF49265">
    <property type="entry name" value="Fibronectin type III"/>
    <property type="match status" value="1"/>
</dbReference>
<dbReference type="PROSITE" id="PS50853">
    <property type="entry name" value="FN3"/>
    <property type="match status" value="1"/>
</dbReference>